<gene>
    <name type="primary">BPIFB1</name>
    <name type="synonym">C20orf114</name>
    <name type="synonym">LPLUNC1</name>
    <name type="ORF">UNQ706/PRO1357</name>
</gene>
<organism>
    <name type="scientific">Homo sapiens</name>
    <name type="common">Human</name>
    <dbReference type="NCBI Taxonomy" id="9606"/>
    <lineage>
        <taxon>Eukaryota</taxon>
        <taxon>Metazoa</taxon>
        <taxon>Chordata</taxon>
        <taxon>Craniata</taxon>
        <taxon>Vertebrata</taxon>
        <taxon>Euteleostomi</taxon>
        <taxon>Mammalia</taxon>
        <taxon>Eutheria</taxon>
        <taxon>Euarchontoglires</taxon>
        <taxon>Primates</taxon>
        <taxon>Haplorrhini</taxon>
        <taxon>Catarrhini</taxon>
        <taxon>Hominidae</taxon>
        <taxon>Homo</taxon>
    </lineage>
</organism>
<dbReference type="EMBL" id="AF364078">
    <property type="protein sequence ID" value="AAM00283.1"/>
    <property type="molecule type" value="mRNA"/>
</dbReference>
<dbReference type="EMBL" id="AY358595">
    <property type="protein sequence ID" value="AAQ88958.1"/>
    <property type="molecule type" value="mRNA"/>
</dbReference>
<dbReference type="EMBL" id="AK127971">
    <property type="protein sequence ID" value="BAC87212.1"/>
    <property type="molecule type" value="mRNA"/>
</dbReference>
<dbReference type="EMBL" id="AK290243">
    <property type="protein sequence ID" value="BAF82932.1"/>
    <property type="molecule type" value="mRNA"/>
</dbReference>
<dbReference type="EMBL" id="AL121901">
    <property type="status" value="NOT_ANNOTATED_CDS"/>
    <property type="molecule type" value="Genomic_DNA"/>
</dbReference>
<dbReference type="EMBL" id="AL355392">
    <property type="status" value="NOT_ANNOTATED_CDS"/>
    <property type="molecule type" value="Genomic_DNA"/>
</dbReference>
<dbReference type="EMBL" id="BC008429">
    <property type="protein sequence ID" value="AAH08429.1"/>
    <property type="molecule type" value="mRNA"/>
</dbReference>
<dbReference type="CCDS" id="CCDS13218.1">
    <molecule id="Q8TDL5-1"/>
</dbReference>
<dbReference type="RefSeq" id="NP_149974.2">
    <molecule id="Q8TDL5-1"/>
    <property type="nucleotide sequence ID" value="NM_033197.2"/>
</dbReference>
<dbReference type="RefSeq" id="XP_054180200.1">
    <molecule id="Q8TDL5-1"/>
    <property type="nucleotide sequence ID" value="XM_054324225.1"/>
</dbReference>
<dbReference type="SMR" id="Q8TDL5"/>
<dbReference type="BioGRID" id="124975">
    <property type="interactions" value="74"/>
</dbReference>
<dbReference type="CORUM" id="Q8TDL5"/>
<dbReference type="FunCoup" id="Q8TDL5">
    <property type="interactions" value="168"/>
</dbReference>
<dbReference type="IntAct" id="Q8TDL5">
    <property type="interactions" value="45"/>
</dbReference>
<dbReference type="MINT" id="Q8TDL5"/>
<dbReference type="STRING" id="9606.ENSP00000253354"/>
<dbReference type="GlyConnect" id="1047">
    <property type="glycosylation" value="3 N-Linked glycans (2 sites)"/>
</dbReference>
<dbReference type="GlyCosmos" id="Q8TDL5">
    <property type="glycosylation" value="3 sites, 2 glycans"/>
</dbReference>
<dbReference type="GlyGen" id="Q8TDL5">
    <property type="glycosylation" value="3 sites, 2 N-linked glycans (2 sites)"/>
</dbReference>
<dbReference type="iPTMnet" id="Q8TDL5"/>
<dbReference type="PhosphoSitePlus" id="Q8TDL5"/>
<dbReference type="BioMuta" id="BPIFB1"/>
<dbReference type="DMDM" id="34395685"/>
<dbReference type="CPTAC" id="CPTAC-1490"/>
<dbReference type="jPOST" id="Q8TDL5"/>
<dbReference type="MassIVE" id="Q8TDL5"/>
<dbReference type="PaxDb" id="9606-ENSP00000253354"/>
<dbReference type="PeptideAtlas" id="Q8TDL5"/>
<dbReference type="PRIDE" id="Q8TDL5"/>
<dbReference type="ProteomicsDB" id="74296">
    <molecule id="Q8TDL5-1"/>
</dbReference>
<dbReference type="ProteomicsDB" id="74297">
    <molecule id="Q8TDL5-2"/>
</dbReference>
<dbReference type="TopDownProteomics" id="Q8TDL5-1">
    <molecule id="Q8TDL5-1"/>
</dbReference>
<dbReference type="Antibodypedia" id="10629">
    <property type="antibodies" value="195 antibodies from 23 providers"/>
</dbReference>
<dbReference type="DNASU" id="92747"/>
<dbReference type="Ensembl" id="ENST00000253354.2">
    <molecule id="Q8TDL5-1"/>
    <property type="protein sequence ID" value="ENSP00000253354.1"/>
    <property type="gene ID" value="ENSG00000125999.11"/>
</dbReference>
<dbReference type="GeneID" id="92747"/>
<dbReference type="KEGG" id="hsa:92747"/>
<dbReference type="MANE-Select" id="ENST00000253354.2">
    <property type="protein sequence ID" value="ENSP00000253354.1"/>
    <property type="RefSeq nucleotide sequence ID" value="NM_033197.3"/>
    <property type="RefSeq protein sequence ID" value="NP_149974.2"/>
</dbReference>
<dbReference type="UCSC" id="uc002wyw.1">
    <molecule id="Q8TDL5-1"/>
    <property type="organism name" value="human"/>
</dbReference>
<dbReference type="AGR" id="HGNC:16108"/>
<dbReference type="CTD" id="92747"/>
<dbReference type="DisGeNET" id="92747"/>
<dbReference type="GeneCards" id="BPIFB1"/>
<dbReference type="HGNC" id="HGNC:16108">
    <property type="gene designation" value="BPIFB1"/>
</dbReference>
<dbReference type="HPA" id="ENSG00000125999">
    <property type="expression patterns" value="Group enriched (cervix, salivary gland, stomach)"/>
</dbReference>
<dbReference type="neXtProt" id="NX_Q8TDL5"/>
<dbReference type="OpenTargets" id="ENSG00000125999"/>
<dbReference type="PharmGKB" id="PA25654"/>
<dbReference type="VEuPathDB" id="HostDB:ENSG00000125999"/>
<dbReference type="eggNOG" id="KOG4160">
    <property type="taxonomic scope" value="Eukaryota"/>
</dbReference>
<dbReference type="GeneTree" id="ENSGT01100000263546"/>
<dbReference type="HOGENOM" id="CLU_050473_0_0_1"/>
<dbReference type="InParanoid" id="Q8TDL5"/>
<dbReference type="OMA" id="ELCPVIK"/>
<dbReference type="OrthoDB" id="9833455at2759"/>
<dbReference type="PAN-GO" id="Q8TDL5">
    <property type="GO annotations" value="2 GO annotations based on evolutionary models"/>
</dbReference>
<dbReference type="PhylomeDB" id="Q8TDL5"/>
<dbReference type="TreeFam" id="TF338541"/>
<dbReference type="PathwayCommons" id="Q8TDL5"/>
<dbReference type="Reactome" id="R-HSA-6803157">
    <property type="pathway name" value="Antimicrobial peptides"/>
</dbReference>
<dbReference type="SignaLink" id="Q8TDL5"/>
<dbReference type="BioGRID-ORCS" id="92747">
    <property type="hits" value="10 hits in 1147 CRISPR screens"/>
</dbReference>
<dbReference type="ChiTaRS" id="BPIFB1">
    <property type="organism name" value="human"/>
</dbReference>
<dbReference type="GenomeRNAi" id="92747"/>
<dbReference type="Pharos" id="Q8TDL5">
    <property type="development level" value="Tbio"/>
</dbReference>
<dbReference type="PRO" id="PR:Q8TDL5"/>
<dbReference type="Proteomes" id="UP000005640">
    <property type="component" value="Chromosome 20"/>
</dbReference>
<dbReference type="RNAct" id="Q8TDL5">
    <property type="molecule type" value="protein"/>
</dbReference>
<dbReference type="Bgee" id="ENSG00000125999">
    <property type="expression patterns" value="Expressed in bronchus and 104 other cell types or tissues"/>
</dbReference>
<dbReference type="ExpressionAtlas" id="Q8TDL5">
    <property type="expression patterns" value="baseline and differential"/>
</dbReference>
<dbReference type="GO" id="GO:0070062">
    <property type="term" value="C:extracellular exosome"/>
    <property type="evidence" value="ECO:0007005"/>
    <property type="project" value="UniProtKB"/>
</dbReference>
<dbReference type="GO" id="GO:0005576">
    <property type="term" value="C:extracellular region"/>
    <property type="evidence" value="ECO:0000314"/>
    <property type="project" value="UniProtKB"/>
</dbReference>
<dbReference type="GO" id="GO:0008289">
    <property type="term" value="F:lipid binding"/>
    <property type="evidence" value="ECO:0007669"/>
    <property type="project" value="InterPro"/>
</dbReference>
<dbReference type="GO" id="GO:0002227">
    <property type="term" value="P:innate immune response in mucosa"/>
    <property type="evidence" value="ECO:0000314"/>
    <property type="project" value="UniProtKB"/>
</dbReference>
<dbReference type="GO" id="GO:0034144">
    <property type="term" value="P:negative regulation of toll-like receptor 4 signaling pathway"/>
    <property type="evidence" value="ECO:0000314"/>
    <property type="project" value="UniProtKB"/>
</dbReference>
<dbReference type="CDD" id="cd00025">
    <property type="entry name" value="BPI1"/>
    <property type="match status" value="1"/>
</dbReference>
<dbReference type="CDD" id="cd00026">
    <property type="entry name" value="BPI2"/>
    <property type="match status" value="1"/>
</dbReference>
<dbReference type="FunFam" id="3.15.10.10:FF:000008">
    <property type="entry name" value="BPI fold containing family B member 1"/>
    <property type="match status" value="1"/>
</dbReference>
<dbReference type="FunFam" id="3.15.20.10:FF:000007">
    <property type="entry name" value="BPI fold-containing family B member 1"/>
    <property type="match status" value="1"/>
</dbReference>
<dbReference type="Gene3D" id="3.15.10.10">
    <property type="entry name" value="Bactericidal permeability-increasing protein, domain 1"/>
    <property type="match status" value="1"/>
</dbReference>
<dbReference type="Gene3D" id="3.15.20.10">
    <property type="entry name" value="Bactericidal permeability-increasing protein, domain 2"/>
    <property type="match status" value="1"/>
</dbReference>
<dbReference type="InterPro" id="IPR017943">
    <property type="entry name" value="Bactericidal_perm-incr_a/b_dom"/>
</dbReference>
<dbReference type="InterPro" id="IPR021193">
    <property type="entry name" value="Bpifb1"/>
</dbReference>
<dbReference type="InterPro" id="IPR001124">
    <property type="entry name" value="Lipid-bd_serum_glycop_C"/>
</dbReference>
<dbReference type="InterPro" id="IPR017942">
    <property type="entry name" value="Lipid-bd_serum_glycop_N"/>
</dbReference>
<dbReference type="PANTHER" id="PTHR47395">
    <property type="entry name" value="BPI FOLD-CONTAINING FAMILY B MEMBER 1"/>
    <property type="match status" value="1"/>
</dbReference>
<dbReference type="PANTHER" id="PTHR47395:SF1">
    <property type="entry name" value="BPI FOLD-CONTAINING FAMILY B MEMBER 1"/>
    <property type="match status" value="1"/>
</dbReference>
<dbReference type="Pfam" id="PF01273">
    <property type="entry name" value="LBP_BPI_CETP"/>
    <property type="match status" value="1"/>
</dbReference>
<dbReference type="Pfam" id="PF02886">
    <property type="entry name" value="LBP_BPI_CETP_C"/>
    <property type="match status" value="1"/>
</dbReference>
<dbReference type="PIRSF" id="PIRSF037186">
    <property type="entry name" value="PLUNC_long_form"/>
    <property type="match status" value="1"/>
</dbReference>
<dbReference type="SMART" id="SM00328">
    <property type="entry name" value="BPI1"/>
    <property type="match status" value="1"/>
</dbReference>
<dbReference type="SUPFAM" id="SSF55394">
    <property type="entry name" value="Bactericidal permeability-increasing protein, BPI"/>
    <property type="match status" value="2"/>
</dbReference>
<sequence length="484" mass="52442">MAGPWTFTLLCGLLAATLIQATLSPTAVLILGPKVIKEKLTQELKDHNATSILQQLPLLSAMREKPAGGIPVLGSLVNTVLKHIIWLKVITANILQLQVKPSANDQELLVKIPLDMVAGFNTPLVKTIVEFHMTTEAQATIRMDTSASGPTRLVLSDCATSHGSLRIQLLHKLSFLVNALAKQVMNLLVPSLPNLVKNQLCPVIEASFNGMYADLLQLVKVPISLSIDRLEFDLLYPAIKGDTIQLYLGAKLLDSQGKVTKWFNNSAASLTMPTLDNIPFSLIVSQDVVKAAVAAVLSPEEFMVLLDSVLPESAHRLKSSIGLINEKAADKLGSTQIVKILTQDTPEFFIDQGHAKVAQLIVLEVFPSSEALRPLFTLGIEASSEAQFYTKGDQLILNLNNISSDRIQLMNSGIGWFQPDVLKNIITEIIHSILLPNQNGKLRSGVPVSLVKALGFEAAESSLTKDALVLTPASLWKPSSPVSQ</sequence>
<accession>Q8TDL5</accession>
<accession>A8K2H8</accession>
<accession>Q5QP43</accession>
<accession>Q6UWY1</accession>
<accession>Q6ZRU7</accession>
<accession>Q96HK6</accession>
<accession>Q9BQP8</accession>
<accession>Q9BWZ6</accession>
<accession>Q9H4V6</accession>
<name>BPIB1_HUMAN</name>
<comment type="function">
    <text evidence="5">May play a role in innate immunity in mouth, nose and lungs. Binds bacterial lipopolysaccharide (LPS) and modulates the cellular responses to LPS.</text>
</comment>
<comment type="subcellular location">
    <subcellularLocation>
        <location evidence="1">Secreted</location>
    </subcellularLocation>
</comment>
<comment type="alternative products">
    <event type="alternative splicing"/>
    <isoform>
        <id>Q8TDL5-1</id>
        <name>1</name>
        <sequence type="displayed"/>
    </isoform>
    <isoform>
        <id>Q8TDL5-2</id>
        <name>2</name>
        <sequence type="described" ref="VSP_015285 VSP_015286 VSP_015287 VSP_015288"/>
    </isoform>
</comment>
<comment type="tissue specificity">
    <text evidence="5">Detected in duodenum mucosal crypts of cholera patients, near Paneth cells (at protein level). Detected in trachea, nasal septal epithelium and lung.</text>
</comment>
<comment type="similarity">
    <text evidence="7">Belongs to the BPI/LBP/Plunc superfamily. Plunc family.</text>
</comment>
<evidence type="ECO:0000250" key="1"/>
<evidence type="ECO:0000255" key="2"/>
<evidence type="ECO:0000269" key="3">
    <source>
    </source>
</evidence>
<evidence type="ECO:0000269" key="4">
    <source>
    </source>
</evidence>
<evidence type="ECO:0000269" key="5">
    <source>
    </source>
</evidence>
<evidence type="ECO:0000303" key="6">
    <source>
    </source>
</evidence>
<evidence type="ECO:0000305" key="7"/>
<keyword id="KW-0025">Alternative splicing</keyword>
<keyword id="KW-1015">Disulfide bond</keyword>
<keyword id="KW-0325">Glycoprotein</keyword>
<keyword id="KW-0391">Immunity</keyword>
<keyword id="KW-0399">Innate immunity</keyword>
<keyword id="KW-1267">Proteomics identification</keyword>
<keyword id="KW-1185">Reference proteome</keyword>
<keyword id="KW-0964">Secreted</keyword>
<keyword id="KW-0732">Signal</keyword>
<protein>
    <recommendedName>
        <fullName>BPI fold-containing family B member 1</fullName>
    </recommendedName>
    <alternativeName>
        <fullName>Long palate, lung and nasal epithelium carcinoma-associated protein 1</fullName>
    </alternativeName>
    <alternativeName>
        <fullName>von Ebner minor salivary gland protein</fullName>
        <shortName>VEMSGP</shortName>
    </alternativeName>
</protein>
<proteinExistence type="evidence at protein level"/>
<feature type="signal peptide" evidence="2">
    <location>
        <begin position="1"/>
        <end position="21"/>
    </location>
</feature>
<feature type="chain" id="PRO_0000017180" description="BPI fold-containing family B member 1">
    <location>
        <begin position="22"/>
        <end position="484"/>
    </location>
</feature>
<feature type="glycosylation site" description="N-linked (GlcNAc...) asparagine" evidence="2">
    <location>
        <position position="48"/>
    </location>
</feature>
<feature type="glycosylation site" description="N-linked (GlcNAc...) asparagine" evidence="2">
    <location>
        <position position="264"/>
    </location>
</feature>
<feature type="glycosylation site" description="N-linked (GlcNAc...) asparagine" evidence="2">
    <location>
        <position position="401"/>
    </location>
</feature>
<feature type="disulfide bond" evidence="1">
    <location>
        <begin position="158"/>
        <end position="201"/>
    </location>
</feature>
<feature type="splice variant" id="VSP_015285" description="In isoform 2." evidence="6">
    <location>
        <begin position="1"/>
        <end position="169"/>
    </location>
</feature>
<feature type="splice variant" id="VSP_015286" description="In isoform 2." evidence="6">
    <original>LHKLSFLVNALAKQVMNLLVPSLPNLVKNQLCPVIEASFNGMYADLLQLVK</original>
    <variation>MCCPGGHYTLILRRGNRFRREKRPAKVTGAQTEVQLAPPLPRGRARRSPWS</variation>
    <location>
        <begin position="170"/>
        <end position="220"/>
    </location>
</feature>
<feature type="splice variant" id="VSP_015287" description="In isoform 2." evidence="6">
    <original>AA</original>
    <variation>LQ</variation>
    <location>
        <begin position="328"/>
        <end position="329"/>
    </location>
</feature>
<feature type="splice variant" id="VSP_015288" description="In isoform 2." evidence="6">
    <location>
        <begin position="330"/>
        <end position="484"/>
    </location>
</feature>
<feature type="sequence variant" id="VAR_016756" description="In dbSNP:rs1078761." evidence="4">
    <original>I</original>
    <variation>V</variation>
    <location>
        <position position="84"/>
    </location>
</feature>
<feature type="sequence variant" id="VAR_049747" description="In dbSNP:rs34578060.">
    <original>T</original>
    <variation>A</variation>
    <location>
        <position position="140"/>
    </location>
</feature>
<feature type="sequence variant" id="VAR_049748" description="In dbSNP:rs6141383.">
    <original>V</original>
    <variation>M</variation>
    <location>
        <position position="284"/>
    </location>
</feature>
<feature type="sequence variant" id="VAR_049749" description="In dbSNP:rs34548457.">
    <original>D</original>
    <variation>H</variation>
    <location>
        <position position="287"/>
    </location>
</feature>
<feature type="sequence variant" id="VAR_023361" description="In dbSNP:rs6120221.">
    <original>S</original>
    <variation>P</variation>
    <location>
        <position position="298"/>
    </location>
</feature>
<feature type="sequence variant" id="VAR_023362" description="In dbSNP:rs6120222.">
    <original>S</original>
    <variation>I</variation>
    <location>
        <position position="313"/>
    </location>
</feature>
<feature type="sequence variant" id="VAR_049750" description="In dbSNP:rs17856249." evidence="4">
    <original>T</original>
    <variation>S</variation>
    <location>
        <position position="464"/>
    </location>
</feature>
<feature type="sequence variant" id="VAR_016757" description="In dbSNP:rs1999663." evidence="3 4">
    <original>S</original>
    <variation>T</variation>
    <location>
        <position position="479"/>
    </location>
</feature>
<feature type="sequence conflict" description="In Ref. 2; AAQ88958." evidence="7" ref="2">
    <original>H</original>
    <variation>Y</variation>
    <location>
        <position position="171"/>
    </location>
</feature>
<reference key="1">
    <citation type="journal article" date="2002" name="Hum. Mol. Genet.">
        <title>PLUNC: a novel family of candidate host defence proteins expressed in the upper airways and nasopharynx.</title>
        <authorList>
            <person name="Bingle C.D."/>
            <person name="Craven C.J."/>
        </authorList>
    </citation>
    <scope>NUCLEOTIDE SEQUENCE [MRNA] (ISOFORM 1)</scope>
    <source>
        <tissue>Lung</tissue>
        <tissue>Nasal epithelium</tissue>
        <tissue>Submandibular gland</tissue>
    </source>
</reference>
<reference key="2">
    <citation type="journal article" date="2003" name="Genome Res.">
        <title>The secreted protein discovery initiative (SPDI), a large-scale effort to identify novel human secreted and transmembrane proteins: a bioinformatics assessment.</title>
        <authorList>
            <person name="Clark H.F."/>
            <person name="Gurney A.L."/>
            <person name="Abaya E."/>
            <person name="Baker K."/>
            <person name="Baldwin D.T."/>
            <person name="Brush J."/>
            <person name="Chen J."/>
            <person name="Chow B."/>
            <person name="Chui C."/>
            <person name="Crowley C."/>
            <person name="Currell B."/>
            <person name="Deuel B."/>
            <person name="Dowd P."/>
            <person name="Eaton D."/>
            <person name="Foster J.S."/>
            <person name="Grimaldi C."/>
            <person name="Gu Q."/>
            <person name="Hass P.E."/>
            <person name="Heldens S."/>
            <person name="Huang A."/>
            <person name="Kim H.S."/>
            <person name="Klimowski L."/>
            <person name="Jin Y."/>
            <person name="Johnson S."/>
            <person name="Lee J."/>
            <person name="Lewis L."/>
            <person name="Liao D."/>
            <person name="Mark M.R."/>
            <person name="Robbie E."/>
            <person name="Sanchez C."/>
            <person name="Schoenfeld J."/>
            <person name="Seshagiri S."/>
            <person name="Simmons L."/>
            <person name="Singh J."/>
            <person name="Smith V."/>
            <person name="Stinson J."/>
            <person name="Vagts A."/>
            <person name="Vandlen R.L."/>
            <person name="Watanabe C."/>
            <person name="Wieand D."/>
            <person name="Woods K."/>
            <person name="Xie M.-H."/>
            <person name="Yansura D.G."/>
            <person name="Yi S."/>
            <person name="Yu G."/>
            <person name="Yuan J."/>
            <person name="Zhang M."/>
            <person name="Zhang Z."/>
            <person name="Goddard A.D."/>
            <person name="Wood W.I."/>
            <person name="Godowski P.J."/>
            <person name="Gray A.M."/>
        </authorList>
    </citation>
    <scope>NUCLEOTIDE SEQUENCE [LARGE SCALE MRNA] (ISOFORM 1)</scope>
</reference>
<reference key="3">
    <citation type="journal article" date="2004" name="Nat. Genet.">
        <title>Complete sequencing and characterization of 21,243 full-length human cDNAs.</title>
        <authorList>
            <person name="Ota T."/>
            <person name="Suzuki Y."/>
            <person name="Nishikawa T."/>
            <person name="Otsuki T."/>
            <person name="Sugiyama T."/>
            <person name="Irie R."/>
            <person name="Wakamatsu A."/>
            <person name="Hayashi K."/>
            <person name="Sato H."/>
            <person name="Nagai K."/>
            <person name="Kimura K."/>
            <person name="Makita H."/>
            <person name="Sekine M."/>
            <person name="Obayashi M."/>
            <person name="Nishi T."/>
            <person name="Shibahara T."/>
            <person name="Tanaka T."/>
            <person name="Ishii S."/>
            <person name="Yamamoto J."/>
            <person name="Saito K."/>
            <person name="Kawai Y."/>
            <person name="Isono Y."/>
            <person name="Nakamura Y."/>
            <person name="Nagahari K."/>
            <person name="Murakami K."/>
            <person name="Yasuda T."/>
            <person name="Iwayanagi T."/>
            <person name="Wagatsuma M."/>
            <person name="Shiratori A."/>
            <person name="Sudo H."/>
            <person name="Hosoiri T."/>
            <person name="Kaku Y."/>
            <person name="Kodaira H."/>
            <person name="Kondo H."/>
            <person name="Sugawara M."/>
            <person name="Takahashi M."/>
            <person name="Kanda K."/>
            <person name="Yokoi T."/>
            <person name="Furuya T."/>
            <person name="Kikkawa E."/>
            <person name="Omura Y."/>
            <person name="Abe K."/>
            <person name="Kamihara K."/>
            <person name="Katsuta N."/>
            <person name="Sato K."/>
            <person name="Tanikawa M."/>
            <person name="Yamazaki M."/>
            <person name="Ninomiya K."/>
            <person name="Ishibashi T."/>
            <person name="Yamashita H."/>
            <person name="Murakawa K."/>
            <person name="Fujimori K."/>
            <person name="Tanai H."/>
            <person name="Kimata M."/>
            <person name="Watanabe M."/>
            <person name="Hiraoka S."/>
            <person name="Chiba Y."/>
            <person name="Ishida S."/>
            <person name="Ono Y."/>
            <person name="Takiguchi S."/>
            <person name="Watanabe S."/>
            <person name="Yosida M."/>
            <person name="Hotuta T."/>
            <person name="Kusano J."/>
            <person name="Kanehori K."/>
            <person name="Takahashi-Fujii A."/>
            <person name="Hara H."/>
            <person name="Tanase T.-O."/>
            <person name="Nomura Y."/>
            <person name="Togiya S."/>
            <person name="Komai F."/>
            <person name="Hara R."/>
            <person name="Takeuchi K."/>
            <person name="Arita M."/>
            <person name="Imose N."/>
            <person name="Musashino K."/>
            <person name="Yuuki H."/>
            <person name="Oshima A."/>
            <person name="Sasaki N."/>
            <person name="Aotsuka S."/>
            <person name="Yoshikawa Y."/>
            <person name="Matsunawa H."/>
            <person name="Ichihara T."/>
            <person name="Shiohata N."/>
            <person name="Sano S."/>
            <person name="Moriya S."/>
            <person name="Momiyama H."/>
            <person name="Satoh N."/>
            <person name="Takami S."/>
            <person name="Terashima Y."/>
            <person name="Suzuki O."/>
            <person name="Nakagawa S."/>
            <person name="Senoh A."/>
            <person name="Mizoguchi H."/>
            <person name="Goto Y."/>
            <person name="Shimizu F."/>
            <person name="Wakebe H."/>
            <person name="Hishigaki H."/>
            <person name="Watanabe T."/>
            <person name="Sugiyama A."/>
            <person name="Takemoto M."/>
            <person name="Kawakami B."/>
            <person name="Yamazaki M."/>
            <person name="Watanabe K."/>
            <person name="Kumagai A."/>
            <person name="Itakura S."/>
            <person name="Fukuzumi Y."/>
            <person name="Fujimori Y."/>
            <person name="Komiyama M."/>
            <person name="Tashiro H."/>
            <person name="Tanigami A."/>
            <person name="Fujiwara T."/>
            <person name="Ono T."/>
            <person name="Yamada K."/>
            <person name="Fujii Y."/>
            <person name="Ozaki K."/>
            <person name="Hirao M."/>
            <person name="Ohmori Y."/>
            <person name="Kawabata A."/>
            <person name="Hikiji T."/>
            <person name="Kobatake N."/>
            <person name="Inagaki H."/>
            <person name="Ikema Y."/>
            <person name="Okamoto S."/>
            <person name="Okitani R."/>
            <person name="Kawakami T."/>
            <person name="Noguchi S."/>
            <person name="Itoh T."/>
            <person name="Shigeta K."/>
            <person name="Senba T."/>
            <person name="Matsumura K."/>
            <person name="Nakajima Y."/>
            <person name="Mizuno T."/>
            <person name="Morinaga M."/>
            <person name="Sasaki M."/>
            <person name="Togashi T."/>
            <person name="Oyama M."/>
            <person name="Hata H."/>
            <person name="Watanabe M."/>
            <person name="Komatsu T."/>
            <person name="Mizushima-Sugano J."/>
            <person name="Satoh T."/>
            <person name="Shirai Y."/>
            <person name="Takahashi Y."/>
            <person name="Nakagawa K."/>
            <person name="Okumura K."/>
            <person name="Nagase T."/>
            <person name="Nomura N."/>
            <person name="Kikuchi H."/>
            <person name="Masuho Y."/>
            <person name="Yamashita R."/>
            <person name="Nakai K."/>
            <person name="Yada T."/>
            <person name="Nakamura Y."/>
            <person name="Ohara O."/>
            <person name="Isogai T."/>
            <person name="Sugano S."/>
        </authorList>
    </citation>
    <scope>NUCLEOTIDE SEQUENCE [LARGE SCALE MRNA] (ISOFORMS 1 AND 2)</scope>
    <scope>VARIANT THR-479</scope>
    <source>
        <tissue>Cervix</tissue>
        <tissue>Testis</tissue>
    </source>
</reference>
<reference key="4">
    <citation type="journal article" date="2001" name="Nature">
        <title>The DNA sequence and comparative analysis of human chromosome 20.</title>
        <authorList>
            <person name="Deloukas P."/>
            <person name="Matthews L.H."/>
            <person name="Ashurst J.L."/>
            <person name="Burton J."/>
            <person name="Gilbert J.G.R."/>
            <person name="Jones M."/>
            <person name="Stavrides G."/>
            <person name="Almeida J.P."/>
            <person name="Babbage A.K."/>
            <person name="Bagguley C.L."/>
            <person name="Bailey J."/>
            <person name="Barlow K.F."/>
            <person name="Bates K.N."/>
            <person name="Beard L.M."/>
            <person name="Beare D.M."/>
            <person name="Beasley O.P."/>
            <person name="Bird C.P."/>
            <person name="Blakey S.E."/>
            <person name="Bridgeman A.M."/>
            <person name="Brown A.J."/>
            <person name="Buck D."/>
            <person name="Burrill W.D."/>
            <person name="Butler A.P."/>
            <person name="Carder C."/>
            <person name="Carter N.P."/>
            <person name="Chapman J.C."/>
            <person name="Clamp M."/>
            <person name="Clark G."/>
            <person name="Clark L.N."/>
            <person name="Clark S.Y."/>
            <person name="Clee C.M."/>
            <person name="Clegg S."/>
            <person name="Cobley V.E."/>
            <person name="Collier R.E."/>
            <person name="Connor R.E."/>
            <person name="Corby N.R."/>
            <person name="Coulson A."/>
            <person name="Coville G.J."/>
            <person name="Deadman R."/>
            <person name="Dhami P.D."/>
            <person name="Dunn M."/>
            <person name="Ellington A.G."/>
            <person name="Frankland J.A."/>
            <person name="Fraser A."/>
            <person name="French L."/>
            <person name="Garner P."/>
            <person name="Grafham D.V."/>
            <person name="Griffiths C."/>
            <person name="Griffiths M.N.D."/>
            <person name="Gwilliam R."/>
            <person name="Hall R.E."/>
            <person name="Hammond S."/>
            <person name="Harley J.L."/>
            <person name="Heath P.D."/>
            <person name="Ho S."/>
            <person name="Holden J.L."/>
            <person name="Howden P.J."/>
            <person name="Huckle E."/>
            <person name="Hunt A.R."/>
            <person name="Hunt S.E."/>
            <person name="Jekosch K."/>
            <person name="Johnson C.M."/>
            <person name="Johnson D."/>
            <person name="Kay M.P."/>
            <person name="Kimberley A.M."/>
            <person name="King A."/>
            <person name="Knights A."/>
            <person name="Laird G.K."/>
            <person name="Lawlor S."/>
            <person name="Lehvaeslaiho M.H."/>
            <person name="Leversha M.A."/>
            <person name="Lloyd C."/>
            <person name="Lloyd D.M."/>
            <person name="Lovell J.D."/>
            <person name="Marsh V.L."/>
            <person name="Martin S.L."/>
            <person name="McConnachie L.J."/>
            <person name="McLay K."/>
            <person name="McMurray A.A."/>
            <person name="Milne S.A."/>
            <person name="Mistry D."/>
            <person name="Moore M.J.F."/>
            <person name="Mullikin J.C."/>
            <person name="Nickerson T."/>
            <person name="Oliver K."/>
            <person name="Parker A."/>
            <person name="Patel R."/>
            <person name="Pearce T.A.V."/>
            <person name="Peck A.I."/>
            <person name="Phillimore B.J.C.T."/>
            <person name="Prathalingam S.R."/>
            <person name="Plumb R.W."/>
            <person name="Ramsay H."/>
            <person name="Rice C.M."/>
            <person name="Ross M.T."/>
            <person name="Scott C.E."/>
            <person name="Sehra H.K."/>
            <person name="Shownkeen R."/>
            <person name="Sims S."/>
            <person name="Skuce C.D."/>
            <person name="Smith M.L."/>
            <person name="Soderlund C."/>
            <person name="Steward C.A."/>
            <person name="Sulston J.E."/>
            <person name="Swann R.M."/>
            <person name="Sycamore N."/>
            <person name="Taylor R."/>
            <person name="Tee L."/>
            <person name="Thomas D.W."/>
            <person name="Thorpe A."/>
            <person name="Tracey A."/>
            <person name="Tromans A.C."/>
            <person name="Vaudin M."/>
            <person name="Wall M."/>
            <person name="Wallis J.M."/>
            <person name="Whitehead S.L."/>
            <person name="Whittaker P."/>
            <person name="Willey D.L."/>
            <person name="Williams L."/>
            <person name="Williams S.A."/>
            <person name="Wilming L."/>
            <person name="Wray P.W."/>
            <person name="Hubbard T."/>
            <person name="Durbin R.M."/>
            <person name="Bentley D.R."/>
            <person name="Beck S."/>
            <person name="Rogers J."/>
        </authorList>
    </citation>
    <scope>NUCLEOTIDE SEQUENCE [LARGE SCALE GENOMIC DNA]</scope>
</reference>
<reference key="5">
    <citation type="journal article" date="2004" name="Genome Res.">
        <title>The status, quality, and expansion of the NIH full-length cDNA project: the Mammalian Gene Collection (MGC).</title>
        <authorList>
            <consortium name="The MGC Project Team"/>
        </authorList>
    </citation>
    <scope>NUCLEOTIDE SEQUENCE [LARGE SCALE MRNA] (ISOFORM 1)</scope>
    <scope>VARIANTS VAL-84; SER-464 AND THR-479</scope>
    <source>
        <tissue>Skeletal muscle</tissue>
    </source>
</reference>
<reference key="6">
    <citation type="journal article" date="2011" name="J. Infect. Dis.">
        <title>LPLUNC1 modulates innate immune responses to Vibrio cholerae.</title>
        <authorList>
            <person name="Shin O.S."/>
            <person name="Uddin T."/>
            <person name="Citorik R."/>
            <person name="Wang J.P."/>
            <person name="Della Pelle P."/>
            <person name="Kradin R.L."/>
            <person name="Bingle C.D."/>
            <person name="Bingle L."/>
            <person name="Camilli A."/>
            <person name="Bhuiyan T.R."/>
            <person name="Shirin T."/>
            <person name="Ryan E.T."/>
            <person name="Calderwood S.B."/>
            <person name="Finberg R.W."/>
            <person name="Qadri F."/>
            <person name="Larocque R.C."/>
            <person name="Harris J.B."/>
        </authorList>
    </citation>
    <scope>LIPOPOLYSACCHARIDE-BINDING</scope>
    <scope>TISSUE SPECIFICITY</scope>
    <scope>FUNCTION</scope>
</reference>